<proteinExistence type="evidence at protein level"/>
<accession>A0R551</accession>
<accession>I7FM13</accession>
<keyword id="KW-0002">3D-structure</keyword>
<keyword id="KW-1185">Reference proteome</keyword>
<keyword id="KW-0687">Ribonucleoprotein</keyword>
<keyword id="KW-0689">Ribosomal protein</keyword>
<gene>
    <name evidence="1" type="primary">rpmG2</name>
    <name type="ordered locus">MSMEG_6067</name>
    <name type="ordered locus">MSMEI_5907</name>
</gene>
<organism>
    <name type="scientific">Mycolicibacterium smegmatis (strain ATCC 700084 / mc(2)155)</name>
    <name type="common">Mycobacterium smegmatis</name>
    <dbReference type="NCBI Taxonomy" id="246196"/>
    <lineage>
        <taxon>Bacteria</taxon>
        <taxon>Bacillati</taxon>
        <taxon>Actinomycetota</taxon>
        <taxon>Actinomycetes</taxon>
        <taxon>Mycobacteriales</taxon>
        <taxon>Mycobacteriaceae</taxon>
        <taxon>Mycolicibacterium</taxon>
    </lineage>
</organism>
<name>RL332_MYCS2</name>
<feature type="chain" id="PRO_0000356555" description="Large ribosomal subunit protein bL33B">
    <location>
        <begin position="1"/>
        <end position="54"/>
    </location>
</feature>
<feature type="strand" evidence="2">
    <location>
        <begin position="9"/>
        <end position="13"/>
    </location>
</feature>
<feature type="strand" evidence="3">
    <location>
        <begin position="16"/>
        <end position="18"/>
    </location>
</feature>
<feature type="strand" evidence="2">
    <location>
        <begin position="22"/>
        <end position="25"/>
    </location>
</feature>
<feature type="strand" evidence="2">
    <location>
        <begin position="28"/>
        <end position="31"/>
    </location>
</feature>
<feature type="strand" evidence="3">
    <location>
        <begin position="43"/>
        <end position="45"/>
    </location>
</feature>
<evidence type="ECO:0000255" key="1">
    <source>
        <dbReference type="HAMAP-Rule" id="MF_00294"/>
    </source>
</evidence>
<evidence type="ECO:0007829" key="2">
    <source>
        <dbReference type="PDB" id="5XYM"/>
    </source>
</evidence>
<evidence type="ECO:0007829" key="3">
    <source>
        <dbReference type="PDB" id="6DZP"/>
    </source>
</evidence>
<reference key="1">
    <citation type="submission" date="2006-10" db="EMBL/GenBank/DDBJ databases">
        <authorList>
            <person name="Fleischmann R.D."/>
            <person name="Dodson R.J."/>
            <person name="Haft D.H."/>
            <person name="Merkel J.S."/>
            <person name="Nelson W.C."/>
            <person name="Fraser C.M."/>
        </authorList>
    </citation>
    <scope>NUCLEOTIDE SEQUENCE [LARGE SCALE GENOMIC DNA]</scope>
    <source>
        <strain>ATCC 700084 / mc(2)155</strain>
    </source>
</reference>
<reference key="2">
    <citation type="journal article" date="2007" name="Genome Biol.">
        <title>Interrupted coding sequences in Mycobacterium smegmatis: authentic mutations or sequencing errors?</title>
        <authorList>
            <person name="Deshayes C."/>
            <person name="Perrodou E."/>
            <person name="Gallien S."/>
            <person name="Euphrasie D."/>
            <person name="Schaeffer C."/>
            <person name="Van-Dorsselaer A."/>
            <person name="Poch O."/>
            <person name="Lecompte O."/>
            <person name="Reyrat J.-M."/>
        </authorList>
    </citation>
    <scope>NUCLEOTIDE SEQUENCE [LARGE SCALE GENOMIC DNA]</scope>
    <source>
        <strain>ATCC 700084 / mc(2)155</strain>
    </source>
</reference>
<reference key="3">
    <citation type="journal article" date="2009" name="Genome Res.">
        <title>Ortho-proteogenomics: multiple proteomes investigation through orthology and a new MS-based protocol.</title>
        <authorList>
            <person name="Gallien S."/>
            <person name="Perrodou E."/>
            <person name="Carapito C."/>
            <person name="Deshayes C."/>
            <person name="Reyrat J.-M."/>
            <person name="Van Dorsselaer A."/>
            <person name="Poch O."/>
            <person name="Schaeffer C."/>
            <person name="Lecompte O."/>
        </authorList>
    </citation>
    <scope>NUCLEOTIDE SEQUENCE [LARGE SCALE GENOMIC DNA]</scope>
    <scope>IDENTIFICATION BY MASS SPECTROMETRY [LARGE SCALE ANALYSIS]</scope>
    <source>
        <strain>ATCC 700084 / mc(2)155</strain>
    </source>
</reference>
<comment type="similarity">
    <text evidence="1">Belongs to the bacterial ribosomal protein bL33 family.</text>
</comment>
<sequence length="54" mass="6600">MARNEIRPIVKLRSTAGTGYTYVTRKNRRNDPDRIVLRKYDPVLRRHVEFREER</sequence>
<dbReference type="EMBL" id="CP000480">
    <property type="protein sequence ID" value="ABK75620.1"/>
    <property type="molecule type" value="Genomic_DNA"/>
</dbReference>
<dbReference type="EMBL" id="CP001663">
    <property type="protein sequence ID" value="AFP42340.1"/>
    <property type="molecule type" value="Genomic_DNA"/>
</dbReference>
<dbReference type="RefSeq" id="YP_890289.1">
    <property type="nucleotide sequence ID" value="NC_008596.1"/>
</dbReference>
<dbReference type="PDB" id="5XYM">
    <property type="method" value="EM"/>
    <property type="resolution" value="3.08 A"/>
    <property type="chains" value="1=1-54"/>
</dbReference>
<dbReference type="PDB" id="6DZI">
    <property type="method" value="EM"/>
    <property type="resolution" value="3.46 A"/>
    <property type="chains" value="c=2-54"/>
</dbReference>
<dbReference type="PDB" id="6DZP">
    <property type="method" value="EM"/>
    <property type="resolution" value="3.42 A"/>
    <property type="chains" value="c=1-54"/>
</dbReference>
<dbReference type="PDB" id="8FR8">
    <property type="method" value="EM"/>
    <property type="resolution" value="2.76 A"/>
    <property type="chains" value="c=2-54"/>
</dbReference>
<dbReference type="PDBsum" id="5XYM"/>
<dbReference type="PDBsum" id="6DZI"/>
<dbReference type="PDBsum" id="6DZP"/>
<dbReference type="PDBsum" id="8FR8"/>
<dbReference type="EMDB" id="EMD-29397"/>
<dbReference type="EMDB" id="EMD-6789"/>
<dbReference type="EMDB" id="EMD-8932"/>
<dbReference type="EMDB" id="EMD-8937"/>
<dbReference type="SMR" id="A0R551"/>
<dbReference type="STRING" id="246196.MSMEG_6067"/>
<dbReference type="PaxDb" id="246196-MSMEI_5907"/>
<dbReference type="KEGG" id="msb:LJ00_30000"/>
<dbReference type="KEGG" id="msg:MSMEI_5907"/>
<dbReference type="KEGG" id="msm:MSMEG_6067"/>
<dbReference type="PATRIC" id="fig|246196.19.peg.5905"/>
<dbReference type="eggNOG" id="COG0267">
    <property type="taxonomic scope" value="Bacteria"/>
</dbReference>
<dbReference type="OrthoDB" id="21586at2"/>
<dbReference type="Proteomes" id="UP000000757">
    <property type="component" value="Chromosome"/>
</dbReference>
<dbReference type="Proteomes" id="UP000006158">
    <property type="component" value="Chromosome"/>
</dbReference>
<dbReference type="GO" id="GO:0022625">
    <property type="term" value="C:cytosolic large ribosomal subunit"/>
    <property type="evidence" value="ECO:0007669"/>
    <property type="project" value="TreeGrafter"/>
</dbReference>
<dbReference type="GO" id="GO:0003735">
    <property type="term" value="F:structural constituent of ribosome"/>
    <property type="evidence" value="ECO:0007669"/>
    <property type="project" value="InterPro"/>
</dbReference>
<dbReference type="GO" id="GO:0006412">
    <property type="term" value="P:translation"/>
    <property type="evidence" value="ECO:0007669"/>
    <property type="project" value="UniProtKB-UniRule"/>
</dbReference>
<dbReference type="FunFam" id="2.20.28.120:FF:000002">
    <property type="entry name" value="50S ribosomal protein L33"/>
    <property type="match status" value="1"/>
</dbReference>
<dbReference type="Gene3D" id="2.20.28.120">
    <property type="entry name" value="Ribosomal protein L33"/>
    <property type="match status" value="1"/>
</dbReference>
<dbReference type="HAMAP" id="MF_00294">
    <property type="entry name" value="Ribosomal_bL33"/>
    <property type="match status" value="1"/>
</dbReference>
<dbReference type="InterPro" id="IPR001705">
    <property type="entry name" value="Ribosomal_bL33"/>
</dbReference>
<dbReference type="InterPro" id="IPR018264">
    <property type="entry name" value="Ribosomal_bL33_CS"/>
</dbReference>
<dbReference type="InterPro" id="IPR038584">
    <property type="entry name" value="Ribosomal_bL33_sf"/>
</dbReference>
<dbReference type="InterPro" id="IPR011332">
    <property type="entry name" value="Ribosomal_zn-bd"/>
</dbReference>
<dbReference type="NCBIfam" id="NF001860">
    <property type="entry name" value="PRK00595.1"/>
    <property type="match status" value="1"/>
</dbReference>
<dbReference type="NCBIfam" id="TIGR01023">
    <property type="entry name" value="rpmG_bact"/>
    <property type="match status" value="1"/>
</dbReference>
<dbReference type="PANTHER" id="PTHR15238">
    <property type="entry name" value="54S RIBOSOMAL PROTEIN L39, MITOCHONDRIAL"/>
    <property type="match status" value="1"/>
</dbReference>
<dbReference type="PANTHER" id="PTHR15238:SF1">
    <property type="entry name" value="LARGE RIBOSOMAL SUBUNIT PROTEIN BL33M"/>
    <property type="match status" value="1"/>
</dbReference>
<dbReference type="Pfam" id="PF00471">
    <property type="entry name" value="Ribosomal_L33"/>
    <property type="match status" value="1"/>
</dbReference>
<dbReference type="SUPFAM" id="SSF57829">
    <property type="entry name" value="Zn-binding ribosomal proteins"/>
    <property type="match status" value="1"/>
</dbReference>
<dbReference type="PROSITE" id="PS00582">
    <property type="entry name" value="RIBOSOMAL_L33"/>
    <property type="match status" value="1"/>
</dbReference>
<protein>
    <recommendedName>
        <fullName evidence="1">Large ribosomal subunit protein bL33B</fullName>
    </recommendedName>
    <alternativeName>
        <fullName evidence="1">50S ribosomal protein L33 2</fullName>
    </alternativeName>
</protein>